<feature type="chain" id="PRO_0000256408" description="1-deoxy-D-xylulose-5-phosphate synthase">
    <location>
        <begin position="1"/>
        <end position="647"/>
    </location>
</feature>
<feature type="binding site" evidence="1">
    <location>
        <position position="88"/>
    </location>
    <ligand>
        <name>thiamine diphosphate</name>
        <dbReference type="ChEBI" id="CHEBI:58937"/>
    </ligand>
</feature>
<feature type="binding site" evidence="1">
    <location>
        <begin position="129"/>
        <end position="131"/>
    </location>
    <ligand>
        <name>thiamine diphosphate</name>
        <dbReference type="ChEBI" id="CHEBI:58937"/>
    </ligand>
</feature>
<feature type="binding site" evidence="1">
    <location>
        <position position="160"/>
    </location>
    <ligand>
        <name>Mg(2+)</name>
        <dbReference type="ChEBI" id="CHEBI:18420"/>
    </ligand>
</feature>
<feature type="binding site" evidence="1">
    <location>
        <begin position="161"/>
        <end position="162"/>
    </location>
    <ligand>
        <name>thiamine diphosphate</name>
        <dbReference type="ChEBI" id="CHEBI:58937"/>
    </ligand>
</feature>
<feature type="binding site" evidence="1">
    <location>
        <position position="189"/>
    </location>
    <ligand>
        <name>Mg(2+)</name>
        <dbReference type="ChEBI" id="CHEBI:18420"/>
    </ligand>
</feature>
<feature type="binding site" evidence="1">
    <location>
        <position position="189"/>
    </location>
    <ligand>
        <name>thiamine diphosphate</name>
        <dbReference type="ChEBI" id="CHEBI:58937"/>
    </ligand>
</feature>
<feature type="binding site" evidence="1">
    <location>
        <position position="300"/>
    </location>
    <ligand>
        <name>thiamine diphosphate</name>
        <dbReference type="ChEBI" id="CHEBI:58937"/>
    </ligand>
</feature>
<feature type="binding site" evidence="1">
    <location>
        <position position="377"/>
    </location>
    <ligand>
        <name>thiamine diphosphate</name>
        <dbReference type="ChEBI" id="CHEBI:58937"/>
    </ligand>
</feature>
<comment type="function">
    <text evidence="1">Catalyzes the acyloin condensation reaction between C atoms 2 and 3 of pyruvate and glyceraldehyde 3-phosphate to yield 1-deoxy-D-xylulose-5-phosphate (DXP).</text>
</comment>
<comment type="catalytic activity">
    <reaction evidence="1">
        <text>D-glyceraldehyde 3-phosphate + pyruvate + H(+) = 1-deoxy-D-xylulose 5-phosphate + CO2</text>
        <dbReference type="Rhea" id="RHEA:12605"/>
        <dbReference type="ChEBI" id="CHEBI:15361"/>
        <dbReference type="ChEBI" id="CHEBI:15378"/>
        <dbReference type="ChEBI" id="CHEBI:16526"/>
        <dbReference type="ChEBI" id="CHEBI:57792"/>
        <dbReference type="ChEBI" id="CHEBI:59776"/>
        <dbReference type="EC" id="2.2.1.7"/>
    </reaction>
</comment>
<comment type="cofactor">
    <cofactor evidence="1">
        <name>Mg(2+)</name>
        <dbReference type="ChEBI" id="CHEBI:18420"/>
    </cofactor>
    <text evidence="1">Binds 1 Mg(2+) ion per subunit.</text>
</comment>
<comment type="cofactor">
    <cofactor evidence="1">
        <name>thiamine diphosphate</name>
        <dbReference type="ChEBI" id="CHEBI:58937"/>
    </cofactor>
    <text evidence="1">Binds 1 thiamine pyrophosphate per subunit.</text>
</comment>
<comment type="pathway">
    <text evidence="1">Metabolic intermediate biosynthesis; 1-deoxy-D-xylulose 5-phosphate biosynthesis; 1-deoxy-D-xylulose 5-phosphate from D-glyceraldehyde 3-phosphate and pyruvate: step 1/1.</text>
</comment>
<comment type="subunit">
    <text evidence="1">Homodimer.</text>
</comment>
<comment type="similarity">
    <text evidence="1">Belongs to the transketolase family. DXPS subfamily.</text>
</comment>
<name>DXS_DEHM1</name>
<evidence type="ECO:0000255" key="1">
    <source>
        <dbReference type="HAMAP-Rule" id="MF_00315"/>
    </source>
</evidence>
<keyword id="KW-0414">Isoprene biosynthesis</keyword>
<keyword id="KW-0460">Magnesium</keyword>
<keyword id="KW-0479">Metal-binding</keyword>
<keyword id="KW-0784">Thiamine biosynthesis</keyword>
<keyword id="KW-0786">Thiamine pyrophosphate</keyword>
<keyword id="KW-0808">Transferase</keyword>
<accession>Q3Z8G9</accession>
<dbReference type="EC" id="2.2.1.7" evidence="1"/>
<dbReference type="EMBL" id="CP000027">
    <property type="protein sequence ID" value="AAW39984.1"/>
    <property type="molecule type" value="Genomic_DNA"/>
</dbReference>
<dbReference type="SMR" id="Q3Z8G9"/>
<dbReference type="FunCoup" id="Q3Z8G9">
    <property type="interactions" value="270"/>
</dbReference>
<dbReference type="STRING" id="243164.DET0745"/>
<dbReference type="KEGG" id="det:DET0745"/>
<dbReference type="eggNOG" id="COG1154">
    <property type="taxonomic scope" value="Bacteria"/>
</dbReference>
<dbReference type="HOGENOM" id="CLU_009227_1_4_0"/>
<dbReference type="InParanoid" id="Q3Z8G9"/>
<dbReference type="UniPathway" id="UPA00064">
    <property type="reaction ID" value="UER00091"/>
</dbReference>
<dbReference type="Proteomes" id="UP000008289">
    <property type="component" value="Chromosome"/>
</dbReference>
<dbReference type="GO" id="GO:0005829">
    <property type="term" value="C:cytosol"/>
    <property type="evidence" value="ECO:0007669"/>
    <property type="project" value="TreeGrafter"/>
</dbReference>
<dbReference type="GO" id="GO:0008661">
    <property type="term" value="F:1-deoxy-D-xylulose-5-phosphate synthase activity"/>
    <property type="evidence" value="ECO:0007669"/>
    <property type="project" value="UniProtKB-UniRule"/>
</dbReference>
<dbReference type="GO" id="GO:0000287">
    <property type="term" value="F:magnesium ion binding"/>
    <property type="evidence" value="ECO:0007669"/>
    <property type="project" value="UniProtKB-UniRule"/>
</dbReference>
<dbReference type="GO" id="GO:0030976">
    <property type="term" value="F:thiamine pyrophosphate binding"/>
    <property type="evidence" value="ECO:0007669"/>
    <property type="project" value="UniProtKB-UniRule"/>
</dbReference>
<dbReference type="GO" id="GO:0052865">
    <property type="term" value="P:1-deoxy-D-xylulose 5-phosphate biosynthetic process"/>
    <property type="evidence" value="ECO:0007669"/>
    <property type="project" value="UniProtKB-UniPathway"/>
</dbReference>
<dbReference type="GO" id="GO:0019288">
    <property type="term" value="P:isopentenyl diphosphate biosynthetic process, methylerythritol 4-phosphate pathway"/>
    <property type="evidence" value="ECO:0007669"/>
    <property type="project" value="TreeGrafter"/>
</dbReference>
<dbReference type="GO" id="GO:0016114">
    <property type="term" value="P:terpenoid biosynthetic process"/>
    <property type="evidence" value="ECO:0007669"/>
    <property type="project" value="UniProtKB-UniRule"/>
</dbReference>
<dbReference type="GO" id="GO:0009228">
    <property type="term" value="P:thiamine biosynthetic process"/>
    <property type="evidence" value="ECO:0007669"/>
    <property type="project" value="UniProtKB-UniRule"/>
</dbReference>
<dbReference type="CDD" id="cd02007">
    <property type="entry name" value="TPP_DXS"/>
    <property type="match status" value="1"/>
</dbReference>
<dbReference type="CDD" id="cd07033">
    <property type="entry name" value="TPP_PYR_DXS_TK_like"/>
    <property type="match status" value="1"/>
</dbReference>
<dbReference type="FunFam" id="3.40.50.920:FF:000002">
    <property type="entry name" value="1-deoxy-D-xylulose-5-phosphate synthase"/>
    <property type="match status" value="1"/>
</dbReference>
<dbReference type="FunFam" id="3.40.50.970:FF:000005">
    <property type="entry name" value="1-deoxy-D-xylulose-5-phosphate synthase"/>
    <property type="match status" value="1"/>
</dbReference>
<dbReference type="Gene3D" id="3.40.50.920">
    <property type="match status" value="1"/>
</dbReference>
<dbReference type="Gene3D" id="3.40.50.970">
    <property type="match status" value="2"/>
</dbReference>
<dbReference type="HAMAP" id="MF_00315">
    <property type="entry name" value="DXP_synth"/>
    <property type="match status" value="1"/>
</dbReference>
<dbReference type="InterPro" id="IPR005477">
    <property type="entry name" value="Dxylulose-5-P_synthase"/>
</dbReference>
<dbReference type="InterPro" id="IPR029061">
    <property type="entry name" value="THDP-binding"/>
</dbReference>
<dbReference type="InterPro" id="IPR009014">
    <property type="entry name" value="Transketo_C/PFOR_II"/>
</dbReference>
<dbReference type="InterPro" id="IPR005475">
    <property type="entry name" value="Transketolase-like_Pyr-bd"/>
</dbReference>
<dbReference type="InterPro" id="IPR033248">
    <property type="entry name" value="Transketolase_C"/>
</dbReference>
<dbReference type="InterPro" id="IPR049557">
    <property type="entry name" value="Transketolase_CS"/>
</dbReference>
<dbReference type="NCBIfam" id="TIGR00204">
    <property type="entry name" value="dxs"/>
    <property type="match status" value="1"/>
</dbReference>
<dbReference type="NCBIfam" id="NF003933">
    <property type="entry name" value="PRK05444.2-2"/>
    <property type="match status" value="1"/>
</dbReference>
<dbReference type="PANTHER" id="PTHR43322">
    <property type="entry name" value="1-D-DEOXYXYLULOSE 5-PHOSPHATE SYNTHASE-RELATED"/>
    <property type="match status" value="1"/>
</dbReference>
<dbReference type="PANTHER" id="PTHR43322:SF5">
    <property type="entry name" value="1-DEOXY-D-XYLULOSE-5-PHOSPHATE SYNTHASE, CHLOROPLASTIC"/>
    <property type="match status" value="1"/>
</dbReference>
<dbReference type="Pfam" id="PF13292">
    <property type="entry name" value="DXP_synthase_N"/>
    <property type="match status" value="1"/>
</dbReference>
<dbReference type="Pfam" id="PF02779">
    <property type="entry name" value="Transket_pyr"/>
    <property type="match status" value="1"/>
</dbReference>
<dbReference type="Pfam" id="PF02780">
    <property type="entry name" value="Transketolase_C"/>
    <property type="match status" value="1"/>
</dbReference>
<dbReference type="SMART" id="SM00861">
    <property type="entry name" value="Transket_pyr"/>
    <property type="match status" value="1"/>
</dbReference>
<dbReference type="SUPFAM" id="SSF52518">
    <property type="entry name" value="Thiamin diphosphate-binding fold (THDP-binding)"/>
    <property type="match status" value="2"/>
</dbReference>
<dbReference type="SUPFAM" id="SSF52922">
    <property type="entry name" value="TK C-terminal domain-like"/>
    <property type="match status" value="1"/>
</dbReference>
<dbReference type="PROSITE" id="PS00801">
    <property type="entry name" value="TRANSKETOLASE_1"/>
    <property type="match status" value="1"/>
</dbReference>
<gene>
    <name evidence="1" type="primary">dxs</name>
    <name type="ordered locus">DET0745</name>
</gene>
<organism>
    <name type="scientific">Dehalococcoides mccartyi (strain ATCC BAA-2266 / KCTC 15142 / 195)</name>
    <name type="common">Dehalococcoides ethenogenes (strain 195)</name>
    <dbReference type="NCBI Taxonomy" id="243164"/>
    <lineage>
        <taxon>Bacteria</taxon>
        <taxon>Bacillati</taxon>
        <taxon>Chloroflexota</taxon>
        <taxon>Dehalococcoidia</taxon>
        <taxon>Dehalococcoidales</taxon>
        <taxon>Dehalococcoidaceae</taxon>
        <taxon>Dehalococcoides</taxon>
    </lineage>
</organism>
<protein>
    <recommendedName>
        <fullName evidence="1">1-deoxy-D-xylulose-5-phosphate synthase</fullName>
        <ecNumber evidence="1">2.2.1.7</ecNumber>
    </recommendedName>
    <alternativeName>
        <fullName evidence="1">1-deoxyxylulose-5-phosphate synthase</fullName>
        <shortName evidence="1">DXP synthase</shortName>
        <shortName evidence="1">DXPS</shortName>
    </alternativeName>
</protein>
<reference key="1">
    <citation type="journal article" date="2005" name="Science">
        <title>Genome sequence of the PCE-dechlorinating bacterium Dehalococcoides ethenogenes.</title>
        <authorList>
            <person name="Seshadri R."/>
            <person name="Adrian L."/>
            <person name="Fouts D.E."/>
            <person name="Eisen J.A."/>
            <person name="Phillippy A.M."/>
            <person name="Methe B.A."/>
            <person name="Ward N.L."/>
            <person name="Nelson W.C."/>
            <person name="DeBoy R.T."/>
            <person name="Khouri H.M."/>
            <person name="Kolonay J.F."/>
            <person name="Dodson R.J."/>
            <person name="Daugherty S.C."/>
            <person name="Brinkac L.M."/>
            <person name="Sullivan S.A."/>
            <person name="Madupu R."/>
            <person name="Nelson K.E."/>
            <person name="Kang K.H."/>
            <person name="Impraim M."/>
            <person name="Tran K."/>
            <person name="Robinson J.M."/>
            <person name="Forberger H.A."/>
            <person name="Fraser C.M."/>
            <person name="Zinder S.H."/>
            <person name="Heidelberg J.F."/>
        </authorList>
    </citation>
    <scope>NUCLEOTIDE SEQUENCE [LARGE SCALE GENOMIC DNA]</scope>
    <source>
        <strain>ATCC BAA-2266 / KCTC 15142 / 195</strain>
    </source>
</reference>
<proteinExistence type="inferred from homology"/>
<sequence length="647" mass="69939">MHTGLEISIPHNLQMSKLLDTINSPSDLKKLTLDELRELAVQIREELVNRVTLNGGHLASSLGVVELTIALHRVFESPKDKIIWDVGHQSYAHKLLTGRREQFATLRQHGGLSGFTCRDESPHDPFGAGHASTSISAGLGMAVARDLAKEDYSVISVIGDGAISGGMSFEAINNAGHLHTKFIVILNDNGMAISPSTGALSKFLNNVRFDPRFEFAKRGAKQTITNMPFGKSVWAFTKSIKRKFEKSMLPGSLWEELGFIYLGPVDGHNIRELEAALKCAKDFESQPVLIHMITKKGKGYDDAEADAVKYHGIAPKSGGLKSGHGLSYSQVFGQTLHKIMSDNPKVVAITAAMTDGCGLSEVAADFPDRVFDVGICEQHAVTFAAGMATQGYIPVVVIYSTFLQRSFDQIIHDVCLQKLPVVFAIDRGGIVGDDGKTHQGIFDLSFMSLIPDMIVTAPSDENDLQHLLYTAVNSGKPFALRYPRGFGEGVETEGTLRNIPIGENEVLASGSEIAIFATGKSVAFAKEAMEILAESGIKPTLVNNRYISPLDTELILKIAGNHKYLITVEENVLSGGLGSRINTILAEAGLVNAVKIANIAVPDKFVEHGNQSLLRAKYGLDGKGIAQKVLSLMANTGEAKHQQILCP</sequence>